<comment type="function">
    <text evidence="15">Protein kinase which is a key regulator of actin cytoskeleton and cell polarity. Involved in regulation of smooth muscle contraction, actin cytoskeleton organization, stress fiber and focal adhesion formation, neurite retraction, cell adhesion and motility via phosphorylation of ADD1, BRCA2, CNN1, EZR, DPYSL2, EP300, MSN, MYL9/MLC2, NPM1, RDX, PPP1R12A and VIM. Phosphorylates SORL1 and IRF4. Acts as a negative regulator of VEGF-induced angiogenic endothelial cell activation. Positively regulates the activation of p42/MAPK1-p44/MAPK3 and of p90RSK/RPS6KA1 during myogenic differentiation. Plays an important role in the timely initiation of centrosome duplication. Inhibits keratinocyte terminal differentiation. May regulate closure of the eyelids and ventral body wall through organization of actomyosin bundles. Plays a critical role in the regulation of spine and synaptic properties in the hippocampus. Plays an important role in generating the circadian rhythm of the aortic myofilament Ca(2+) sensitivity and vascular contractility by modulating the myosin light chain phosphorylation.</text>
</comment>
<comment type="catalytic activity">
    <reaction>
        <text>L-seryl-[protein] + ATP = O-phospho-L-seryl-[protein] + ADP + H(+)</text>
        <dbReference type="Rhea" id="RHEA:17989"/>
        <dbReference type="Rhea" id="RHEA-COMP:9863"/>
        <dbReference type="Rhea" id="RHEA-COMP:11604"/>
        <dbReference type="ChEBI" id="CHEBI:15378"/>
        <dbReference type="ChEBI" id="CHEBI:29999"/>
        <dbReference type="ChEBI" id="CHEBI:30616"/>
        <dbReference type="ChEBI" id="CHEBI:83421"/>
        <dbReference type="ChEBI" id="CHEBI:456216"/>
        <dbReference type="EC" id="2.7.11.1"/>
    </reaction>
</comment>
<comment type="catalytic activity">
    <reaction>
        <text>L-threonyl-[protein] + ATP = O-phospho-L-threonyl-[protein] + ADP + H(+)</text>
        <dbReference type="Rhea" id="RHEA:46608"/>
        <dbReference type="Rhea" id="RHEA-COMP:11060"/>
        <dbReference type="Rhea" id="RHEA-COMP:11605"/>
        <dbReference type="ChEBI" id="CHEBI:15378"/>
        <dbReference type="ChEBI" id="CHEBI:30013"/>
        <dbReference type="ChEBI" id="CHEBI:30616"/>
        <dbReference type="ChEBI" id="CHEBI:61977"/>
        <dbReference type="ChEBI" id="CHEBI:456216"/>
        <dbReference type="EC" id="2.7.11.1"/>
    </reaction>
</comment>
<comment type="cofactor">
    <cofactor evidence="1">
        <name>Mg(2+)</name>
        <dbReference type="ChEBI" id="CHEBI:18420"/>
    </cofactor>
</comment>
<comment type="activity regulation">
    <text evidence="1">Activated by RHOA binding. Inhibited by Y-27632 (By similarity).</text>
</comment>
<comment type="subunit">
    <text evidence="2 3 4 5">Homodimer (By similarity). Interacts with IRS1. Interacts with RAF1. Interacts with RHOA (activated by GTP), RHOB and RHOC (By similarity). Interacts with PPP1R12A. Interacts with EP300. Interacts with CHORDC1. Interacts with BRCA2. Interacts with NPM1; this interaction enhances ROCK2 activity. Interacts with SORL1 (By similarity). Interacts with PJVK (By similarity).</text>
</comment>
<comment type="subcellular location">
    <subcellularLocation>
        <location evidence="1">Cytoplasm</location>
    </subcellularLocation>
    <subcellularLocation>
        <location evidence="1">Cell membrane</location>
        <topology evidence="1">Peripheral membrane protein</topology>
    </subcellularLocation>
    <subcellularLocation>
        <location evidence="1">Nucleus</location>
    </subcellularLocation>
    <subcellularLocation>
        <location evidence="1">Cytoplasm</location>
        <location evidence="1">Cytoskeleton</location>
        <location evidence="1">Microtubule organizing center</location>
        <location evidence="1">Centrosome</location>
    </subcellularLocation>
    <text>Cytoplasmic, and associated with actin microfilaments and the plasma membrane.</text>
</comment>
<comment type="induction">
    <text evidence="15">Expression oscillates in a circadian manner in the aortic smooth muscle cells (at protein level).</text>
</comment>
<comment type="domain">
    <text evidence="1">An interaction between Thr-414 and Asp-48 is essential for kinase activity and dimerization.</text>
</comment>
<comment type="PTM">
    <text evidence="1">Autophosphorylated. Phosphorylation at Tyr-722 reduces its binding to RHOA and is crucial for focal adhesion dynamics. Dephosphorylation by PTPN11 stimulates its RHOA binding activity (By similarity).</text>
</comment>
<comment type="PTM">
    <text evidence="1">Cleaved by granzyme B during apoptosis. This leads to constitutive activation of the kinase and membrane blebbing (By similarity).</text>
</comment>
<comment type="similarity">
    <text evidence="16">Belongs to the protein kinase superfamily. AGC Ser/Thr protein kinase family.</text>
</comment>
<gene>
    <name type="primary">ROCK2</name>
</gene>
<dbReference type="EC" id="2.7.11.1"/>
<dbReference type="EMBL" id="GACC01000348">
    <property type="protein sequence ID" value="JAA74236.1"/>
    <property type="molecule type" value="mRNA"/>
</dbReference>
<dbReference type="EMBL" id="CU915597">
    <property type="status" value="NOT_ANNOTATED_CDS"/>
    <property type="molecule type" value="Genomic_DNA"/>
</dbReference>
<dbReference type="RefSeq" id="XP_020943496.1">
    <property type="nucleotide sequence ID" value="XM_021087837.1"/>
</dbReference>
<dbReference type="SMR" id="M3TYT0"/>
<dbReference type="FunCoup" id="M3TYT0">
    <property type="interactions" value="1059"/>
</dbReference>
<dbReference type="IntAct" id="M3TYT0">
    <property type="interactions" value="1"/>
</dbReference>
<dbReference type="STRING" id="9823.ENSSSCP00000060082"/>
<dbReference type="PaxDb" id="9823-ENSSSCP00000009198"/>
<dbReference type="Ensembl" id="ENSSSCT00000093479.1">
    <property type="protein sequence ID" value="ENSSSCP00000079036.1"/>
    <property type="gene ID" value="ENSSSCG00000008629.5"/>
</dbReference>
<dbReference type="Ensembl" id="ENSSSCT00050041186.1">
    <property type="protein sequence ID" value="ENSSSCP00050017010.1"/>
    <property type="gene ID" value="ENSSSCG00050030630.1"/>
</dbReference>
<dbReference type="Ensembl" id="ENSSSCT00055009021.1">
    <property type="protein sequence ID" value="ENSSSCP00055007146.1"/>
    <property type="gene ID" value="ENSSSCG00055004566.1"/>
</dbReference>
<dbReference type="Ensembl" id="ENSSSCT00065078518.1">
    <property type="protein sequence ID" value="ENSSSCP00065034131.1"/>
    <property type="gene ID" value="ENSSSCG00065057361.1"/>
</dbReference>
<dbReference type="Ensembl" id="ENSSSCT00085047121">
    <property type="protein sequence ID" value="ENSSSCP00085032901"/>
    <property type="gene ID" value="ENSSSCG00085024529"/>
</dbReference>
<dbReference type="Ensembl" id="ENSSSCT00105014006">
    <property type="protein sequence ID" value="ENSSSCP00105010216"/>
    <property type="gene ID" value="ENSSSCG00105006847"/>
</dbReference>
<dbReference type="Ensembl" id="ENSSSCT00130004213">
    <property type="protein sequence ID" value="ENSSSCP00130003024"/>
    <property type="gene ID" value="ENSSSCG00130002161"/>
</dbReference>
<dbReference type="GeneID" id="397445"/>
<dbReference type="VGNC" id="VGNC:110710">
    <property type="gene designation" value="ROCK2"/>
</dbReference>
<dbReference type="eggNOG" id="KOG0612">
    <property type="taxonomic scope" value="Eukaryota"/>
</dbReference>
<dbReference type="GeneTree" id="ENSGT01030000234517"/>
<dbReference type="InParanoid" id="M3TYT0"/>
<dbReference type="OMA" id="MRVQANT"/>
<dbReference type="TreeFam" id="TF313551"/>
<dbReference type="Reactome" id="R-SSC-3928662">
    <property type="pathway name" value="EPHB-mediated forward signaling"/>
</dbReference>
<dbReference type="Reactome" id="R-SSC-416482">
    <property type="pathway name" value="G alpha (12/13) signalling events"/>
</dbReference>
<dbReference type="Reactome" id="R-SSC-416572">
    <property type="pathway name" value="Sema4D induced cell migration and growth-cone collapse"/>
</dbReference>
<dbReference type="Reactome" id="R-SSC-4420097">
    <property type="pathway name" value="VEGFA-VEGFR2 Pathway"/>
</dbReference>
<dbReference type="Reactome" id="R-SSC-5627117">
    <property type="pathway name" value="RHO GTPases Activate ROCKs"/>
</dbReference>
<dbReference type="Reactome" id="R-SSC-8980692">
    <property type="pathway name" value="RHOA GTPase cycle"/>
</dbReference>
<dbReference type="Reactome" id="R-SSC-9013026">
    <property type="pathway name" value="RHOB GTPase cycle"/>
</dbReference>
<dbReference type="Reactome" id="R-SSC-9013106">
    <property type="pathway name" value="RHOC GTPase cycle"/>
</dbReference>
<dbReference type="Reactome" id="R-SSC-9013407">
    <property type="pathway name" value="RHOH GTPase cycle"/>
</dbReference>
<dbReference type="Reactome" id="R-SSC-9013422">
    <property type="pathway name" value="RHOBTB1 GTPase cycle"/>
</dbReference>
<dbReference type="ChiTaRS" id="ROCK2">
    <property type="organism name" value="pig"/>
</dbReference>
<dbReference type="Proteomes" id="UP000008227">
    <property type="component" value="Chromosome 3"/>
</dbReference>
<dbReference type="Proteomes" id="UP000314985">
    <property type="component" value="Unplaced"/>
</dbReference>
<dbReference type="Proteomes" id="UP000694570">
    <property type="component" value="Unplaced"/>
</dbReference>
<dbReference type="Proteomes" id="UP000694571">
    <property type="component" value="Unplaced"/>
</dbReference>
<dbReference type="Proteomes" id="UP000694720">
    <property type="component" value="Unplaced"/>
</dbReference>
<dbReference type="Proteomes" id="UP000694722">
    <property type="component" value="Unplaced"/>
</dbReference>
<dbReference type="Proteomes" id="UP000694723">
    <property type="component" value="Unplaced"/>
</dbReference>
<dbReference type="Proteomes" id="UP000694724">
    <property type="component" value="Unplaced"/>
</dbReference>
<dbReference type="Proteomes" id="UP000694725">
    <property type="component" value="Unplaced"/>
</dbReference>
<dbReference type="Proteomes" id="UP000694726">
    <property type="component" value="Unplaced"/>
</dbReference>
<dbReference type="Proteomes" id="UP000694727">
    <property type="component" value="Unplaced"/>
</dbReference>
<dbReference type="Proteomes" id="UP000694728">
    <property type="component" value="Unplaced"/>
</dbReference>
<dbReference type="GO" id="GO:0005813">
    <property type="term" value="C:centrosome"/>
    <property type="evidence" value="ECO:0007669"/>
    <property type="project" value="UniProtKB-SubCell"/>
</dbReference>
<dbReference type="GO" id="GO:0005737">
    <property type="term" value="C:cytoplasm"/>
    <property type="evidence" value="ECO:0007669"/>
    <property type="project" value="UniProtKB-SubCell"/>
</dbReference>
<dbReference type="GO" id="GO:0005634">
    <property type="term" value="C:nucleus"/>
    <property type="evidence" value="ECO:0007669"/>
    <property type="project" value="UniProtKB-SubCell"/>
</dbReference>
<dbReference type="GO" id="GO:0005886">
    <property type="term" value="C:plasma membrane"/>
    <property type="evidence" value="ECO:0007669"/>
    <property type="project" value="UniProtKB-SubCell"/>
</dbReference>
<dbReference type="GO" id="GO:0005524">
    <property type="term" value="F:ATP binding"/>
    <property type="evidence" value="ECO:0007669"/>
    <property type="project" value="UniProtKB-KW"/>
</dbReference>
<dbReference type="GO" id="GO:0106310">
    <property type="term" value="F:protein serine kinase activity"/>
    <property type="evidence" value="ECO:0007669"/>
    <property type="project" value="RHEA"/>
</dbReference>
<dbReference type="GO" id="GO:0004674">
    <property type="term" value="F:protein serine/threonine kinase activity"/>
    <property type="evidence" value="ECO:0007669"/>
    <property type="project" value="UniProtKB-KW"/>
</dbReference>
<dbReference type="GO" id="GO:0031267">
    <property type="term" value="F:small GTPase binding"/>
    <property type="evidence" value="ECO:0007669"/>
    <property type="project" value="InterPro"/>
</dbReference>
<dbReference type="GO" id="GO:0008270">
    <property type="term" value="F:zinc ion binding"/>
    <property type="evidence" value="ECO:0007669"/>
    <property type="project" value="UniProtKB-KW"/>
</dbReference>
<dbReference type="GO" id="GO:0030036">
    <property type="term" value="P:actin cytoskeleton organization"/>
    <property type="evidence" value="ECO:0007669"/>
    <property type="project" value="InterPro"/>
</dbReference>
<dbReference type="GO" id="GO:0003180">
    <property type="term" value="P:aortic valve morphogenesis"/>
    <property type="evidence" value="ECO:0000316"/>
    <property type="project" value="BHF-UCL"/>
</dbReference>
<dbReference type="GO" id="GO:0071560">
    <property type="term" value="P:cellular response to transforming growth factor beta stimulus"/>
    <property type="evidence" value="ECO:0000316"/>
    <property type="project" value="BHF-UCL"/>
</dbReference>
<dbReference type="GO" id="GO:0070168">
    <property type="term" value="P:negative regulation of biomineral tissue development"/>
    <property type="evidence" value="ECO:0000316"/>
    <property type="project" value="BHF-UCL"/>
</dbReference>
<dbReference type="GO" id="GO:0010825">
    <property type="term" value="P:positive regulation of centrosome duplication"/>
    <property type="evidence" value="ECO:0007669"/>
    <property type="project" value="InterPro"/>
</dbReference>
<dbReference type="GO" id="GO:1900182">
    <property type="term" value="P:positive regulation of protein localization to nucleus"/>
    <property type="evidence" value="ECO:0000316"/>
    <property type="project" value="BHF-UCL"/>
</dbReference>
<dbReference type="GO" id="GO:0032956">
    <property type="term" value="P:regulation of actin cytoskeleton organization"/>
    <property type="evidence" value="ECO:0007669"/>
    <property type="project" value="InterPro"/>
</dbReference>
<dbReference type="GO" id="GO:0042752">
    <property type="term" value="P:regulation of circadian rhythm"/>
    <property type="evidence" value="ECO:0000315"/>
    <property type="project" value="UniProtKB"/>
</dbReference>
<dbReference type="GO" id="GO:0007266">
    <property type="term" value="P:Rho protein signal transduction"/>
    <property type="evidence" value="ECO:0007669"/>
    <property type="project" value="InterPro"/>
</dbReference>
<dbReference type="GO" id="GO:0048511">
    <property type="term" value="P:rhythmic process"/>
    <property type="evidence" value="ECO:0007669"/>
    <property type="project" value="UniProtKB-KW"/>
</dbReference>
<dbReference type="GO" id="GO:0006939">
    <property type="term" value="P:smooth muscle contraction"/>
    <property type="evidence" value="ECO:0007669"/>
    <property type="project" value="InterPro"/>
</dbReference>
<dbReference type="CDD" id="cd20875">
    <property type="entry name" value="C1_ROCK2"/>
    <property type="match status" value="1"/>
</dbReference>
<dbReference type="CDD" id="cd11638">
    <property type="entry name" value="HR1_ROCK2"/>
    <property type="match status" value="1"/>
</dbReference>
<dbReference type="CDD" id="cd01242">
    <property type="entry name" value="PH_ROCK"/>
    <property type="match status" value="1"/>
</dbReference>
<dbReference type="CDD" id="cd22250">
    <property type="entry name" value="ROCK_SBD"/>
    <property type="match status" value="1"/>
</dbReference>
<dbReference type="CDD" id="cd05621">
    <property type="entry name" value="STKc_ROCK2"/>
    <property type="match status" value="1"/>
</dbReference>
<dbReference type="FunFam" id="1.10.510.10:FF:000047">
    <property type="entry name" value="Rho-associated protein kinase 1"/>
    <property type="match status" value="1"/>
</dbReference>
<dbReference type="FunFam" id="3.30.60.20:FF:000036">
    <property type="entry name" value="Rho-associated protein kinase 1"/>
    <property type="match status" value="1"/>
</dbReference>
<dbReference type="FunFam" id="1.20.5.340:FF:000016">
    <property type="entry name" value="Rho-associated protein kinase 2"/>
    <property type="match status" value="1"/>
</dbReference>
<dbReference type="FunFam" id="2.30.29.30:FF:000033">
    <property type="entry name" value="Rho-associated protein kinase 2"/>
    <property type="match status" value="1"/>
</dbReference>
<dbReference type="FunFam" id="3.30.200.20:FF:000072">
    <property type="entry name" value="Rho-associated protein kinase 2"/>
    <property type="match status" value="1"/>
</dbReference>
<dbReference type="FunFam" id="1.20.5.730:FF:000001">
    <property type="entry name" value="rho-associated protein kinase 2"/>
    <property type="match status" value="1"/>
</dbReference>
<dbReference type="FunFam" id="3.30.200.20:FF:001759">
    <property type="entry name" value="Rho-associated, coiled-coil-containing protein kinase 2b"/>
    <property type="match status" value="1"/>
</dbReference>
<dbReference type="Gene3D" id="1.20.5.340">
    <property type="match status" value="1"/>
</dbReference>
<dbReference type="Gene3D" id="3.30.60.20">
    <property type="match status" value="1"/>
</dbReference>
<dbReference type="Gene3D" id="3.30.200.20">
    <property type="entry name" value="Phosphorylase Kinase, domain 1"/>
    <property type="match status" value="1"/>
</dbReference>
<dbReference type="Gene3D" id="2.30.29.30">
    <property type="entry name" value="Pleckstrin-homology domain (PH domain)/Phosphotyrosine-binding domain (PTB)"/>
    <property type="match status" value="1"/>
</dbReference>
<dbReference type="Gene3D" id="1.20.5.730">
    <property type="entry name" value="Single helix bin"/>
    <property type="match status" value="1"/>
</dbReference>
<dbReference type="Gene3D" id="1.10.510.10">
    <property type="entry name" value="Transferase(Phosphotransferase) domain 1"/>
    <property type="match status" value="1"/>
</dbReference>
<dbReference type="InterPro" id="IPR000961">
    <property type="entry name" value="AGC-kinase_C"/>
</dbReference>
<dbReference type="InterPro" id="IPR046349">
    <property type="entry name" value="C1-like_sf"/>
</dbReference>
<dbReference type="InterPro" id="IPR011072">
    <property type="entry name" value="HR1_rho-bd"/>
</dbReference>
<dbReference type="InterPro" id="IPR011009">
    <property type="entry name" value="Kinase-like_dom_sf"/>
</dbReference>
<dbReference type="InterPro" id="IPR002219">
    <property type="entry name" value="PE/DAG-bd"/>
</dbReference>
<dbReference type="InterPro" id="IPR011993">
    <property type="entry name" value="PH-like_dom_sf"/>
</dbReference>
<dbReference type="InterPro" id="IPR001849">
    <property type="entry name" value="PH_domain"/>
</dbReference>
<dbReference type="InterPro" id="IPR000719">
    <property type="entry name" value="Prot_kinase_dom"/>
</dbReference>
<dbReference type="InterPro" id="IPR017441">
    <property type="entry name" value="Protein_kinase_ATP_BS"/>
</dbReference>
<dbReference type="InterPro" id="IPR050839">
    <property type="entry name" value="Rho-assoc_Ser/Thr_Kinase"/>
</dbReference>
<dbReference type="InterPro" id="IPR020684">
    <property type="entry name" value="ROCK1/ROCK2"/>
</dbReference>
<dbReference type="InterPro" id="IPR029878">
    <property type="entry name" value="ROCK2_cat"/>
</dbReference>
<dbReference type="InterPro" id="IPR037311">
    <property type="entry name" value="ROCK2_HR1"/>
</dbReference>
<dbReference type="InterPro" id="IPR015008">
    <property type="entry name" value="ROCK_Rho-bd_dom"/>
</dbReference>
<dbReference type="InterPro" id="IPR008271">
    <property type="entry name" value="Ser/Thr_kinase_AS"/>
</dbReference>
<dbReference type="PANTHER" id="PTHR22988">
    <property type="entry name" value="MYOTONIC DYSTROPHY S/T KINASE-RELATED"/>
    <property type="match status" value="1"/>
</dbReference>
<dbReference type="PANTHER" id="PTHR22988:SF28">
    <property type="entry name" value="RHO-ASSOCIATED PROTEIN KINASE 2"/>
    <property type="match status" value="1"/>
</dbReference>
<dbReference type="Pfam" id="PF25346">
    <property type="entry name" value="PH_MRCK"/>
    <property type="match status" value="1"/>
</dbReference>
<dbReference type="Pfam" id="PF00069">
    <property type="entry name" value="Pkinase"/>
    <property type="match status" value="1"/>
</dbReference>
<dbReference type="Pfam" id="PF08912">
    <property type="entry name" value="Rho_Binding"/>
    <property type="match status" value="1"/>
</dbReference>
<dbReference type="PIRSF" id="PIRSF037568">
    <property type="entry name" value="Rho_kinase"/>
    <property type="match status" value="1"/>
</dbReference>
<dbReference type="SMART" id="SM00109">
    <property type="entry name" value="C1"/>
    <property type="match status" value="1"/>
</dbReference>
<dbReference type="SMART" id="SM00233">
    <property type="entry name" value="PH"/>
    <property type="match status" value="1"/>
</dbReference>
<dbReference type="SMART" id="SM00133">
    <property type="entry name" value="S_TK_X"/>
    <property type="match status" value="1"/>
</dbReference>
<dbReference type="SMART" id="SM00220">
    <property type="entry name" value="S_TKc"/>
    <property type="match status" value="1"/>
</dbReference>
<dbReference type="SUPFAM" id="SSF57889">
    <property type="entry name" value="Cysteine-rich domain"/>
    <property type="match status" value="1"/>
</dbReference>
<dbReference type="SUPFAM" id="SSF103652">
    <property type="entry name" value="G protein-binding domain"/>
    <property type="match status" value="1"/>
</dbReference>
<dbReference type="SUPFAM" id="SSF50729">
    <property type="entry name" value="PH domain-like"/>
    <property type="match status" value="1"/>
</dbReference>
<dbReference type="SUPFAM" id="SSF56112">
    <property type="entry name" value="Protein kinase-like (PK-like)"/>
    <property type="match status" value="1"/>
</dbReference>
<dbReference type="PROSITE" id="PS51285">
    <property type="entry name" value="AGC_KINASE_CTER"/>
    <property type="match status" value="1"/>
</dbReference>
<dbReference type="PROSITE" id="PS50003">
    <property type="entry name" value="PH_DOMAIN"/>
    <property type="match status" value="1"/>
</dbReference>
<dbReference type="PROSITE" id="PS00107">
    <property type="entry name" value="PROTEIN_KINASE_ATP"/>
    <property type="match status" value="1"/>
</dbReference>
<dbReference type="PROSITE" id="PS50011">
    <property type="entry name" value="PROTEIN_KINASE_DOM"/>
    <property type="match status" value="1"/>
</dbReference>
<dbReference type="PROSITE" id="PS00108">
    <property type="entry name" value="PROTEIN_KINASE_ST"/>
    <property type="match status" value="1"/>
</dbReference>
<dbReference type="PROSITE" id="PS51860">
    <property type="entry name" value="REM_1"/>
    <property type="match status" value="1"/>
</dbReference>
<dbReference type="PROSITE" id="PS51859">
    <property type="entry name" value="RHO_BD"/>
    <property type="match status" value="1"/>
</dbReference>
<dbReference type="PROSITE" id="PS50081">
    <property type="entry name" value="ZF_DAG_PE_2"/>
    <property type="match status" value="1"/>
</dbReference>
<feature type="chain" id="PRO_0000429860" description="Rho-associated protein kinase 2">
    <location>
        <begin position="1"/>
        <end position="1388"/>
    </location>
</feature>
<feature type="domain" description="Protein kinase" evidence="8">
    <location>
        <begin position="92"/>
        <end position="354"/>
    </location>
</feature>
<feature type="domain" description="AGC-kinase C-terminal" evidence="10">
    <location>
        <begin position="357"/>
        <end position="425"/>
    </location>
</feature>
<feature type="domain" description="REM-1" evidence="12">
    <location>
        <begin position="497"/>
        <end position="573"/>
    </location>
</feature>
<feature type="domain" description="RhoBD" evidence="11">
    <location>
        <begin position="979"/>
        <end position="1047"/>
    </location>
</feature>
<feature type="domain" description="PH" evidence="7">
    <location>
        <begin position="1150"/>
        <end position="1349"/>
    </location>
</feature>
<feature type="zinc finger region" description="Phorbol-ester/DAG-type" evidence="9">
    <location>
        <begin position="1260"/>
        <end position="1315"/>
    </location>
</feature>
<feature type="region of interest" description="Disordered" evidence="14">
    <location>
        <begin position="1"/>
        <end position="24"/>
    </location>
</feature>
<feature type="region of interest" description="Interaction with PPP1R12A" evidence="1">
    <location>
        <begin position="363"/>
        <end position="784"/>
    </location>
</feature>
<feature type="region of interest" description="Interaction with NPM1" evidence="1">
    <location>
        <begin position="373"/>
        <end position="420"/>
    </location>
</feature>
<feature type="region of interest" description="Disordered" evidence="14">
    <location>
        <begin position="512"/>
        <end position="532"/>
    </location>
</feature>
<feature type="region of interest" description="RHOA binding" evidence="1">
    <location>
        <begin position="979"/>
        <end position="1047"/>
    </location>
</feature>
<feature type="region of interest" description="Disordered" evidence="14">
    <location>
        <begin position="1345"/>
        <end position="1388"/>
    </location>
</feature>
<feature type="coiled-coil region" evidence="6">
    <location>
        <begin position="1054"/>
        <end position="1126"/>
    </location>
</feature>
<feature type="compositionally biased region" description="Basic and acidic residues" evidence="14">
    <location>
        <begin position="512"/>
        <end position="530"/>
    </location>
</feature>
<feature type="compositionally biased region" description="Polar residues" evidence="14">
    <location>
        <begin position="1362"/>
        <end position="1376"/>
    </location>
</feature>
<feature type="active site" description="Proton acceptor" evidence="8 13">
    <location>
        <position position="214"/>
    </location>
</feature>
<feature type="binding site" evidence="8">
    <location>
        <begin position="98"/>
        <end position="106"/>
    </location>
    <ligand>
        <name>ATP</name>
        <dbReference type="ChEBI" id="CHEBI:30616"/>
    </ligand>
</feature>
<feature type="binding site" evidence="8">
    <location>
        <position position="121"/>
    </location>
    <ligand>
        <name>ATP</name>
        <dbReference type="ChEBI" id="CHEBI:30616"/>
    </ligand>
</feature>
<feature type="site" description="Cleavage; by granzyme B" evidence="1">
    <location>
        <begin position="1131"/>
        <end position="1132"/>
    </location>
</feature>
<feature type="modified residue" description="Phosphothreonine; by ROCK2" evidence="5">
    <location>
        <position position="414"/>
    </location>
</feature>
<feature type="modified residue" description="Phosphotyrosine; by SRC" evidence="2">
    <location>
        <position position="722"/>
    </location>
</feature>
<feature type="modified residue" description="Phosphoserine" evidence="2">
    <location>
        <position position="1137"/>
    </location>
</feature>
<feature type="modified residue" description="Phosphothreonine" evidence="2">
    <location>
        <position position="1212"/>
    </location>
</feature>
<feature type="modified residue" description="Phosphoserine" evidence="2">
    <location>
        <position position="1362"/>
    </location>
</feature>
<feature type="modified residue" description="Phosphoserine" evidence="2">
    <location>
        <position position="1374"/>
    </location>
</feature>
<proteinExistence type="evidence at protein level"/>
<keyword id="KW-0067">ATP-binding</keyword>
<keyword id="KW-0090">Biological rhythms</keyword>
<keyword id="KW-1003">Cell membrane</keyword>
<keyword id="KW-0175">Coiled coil</keyword>
<keyword id="KW-0963">Cytoplasm</keyword>
<keyword id="KW-0206">Cytoskeleton</keyword>
<keyword id="KW-0418">Kinase</keyword>
<keyword id="KW-0460">Magnesium</keyword>
<keyword id="KW-0472">Membrane</keyword>
<keyword id="KW-0479">Metal-binding</keyword>
<keyword id="KW-0547">Nucleotide-binding</keyword>
<keyword id="KW-0539">Nucleus</keyword>
<keyword id="KW-0597">Phosphoprotein</keyword>
<keyword id="KW-1185">Reference proteome</keyword>
<keyword id="KW-0723">Serine/threonine-protein kinase</keyword>
<keyword id="KW-0808">Transferase</keyword>
<keyword id="KW-0862">Zinc</keyword>
<keyword id="KW-0863">Zinc-finger</keyword>
<organism>
    <name type="scientific">Sus scrofa</name>
    <name type="common">Pig</name>
    <dbReference type="NCBI Taxonomy" id="9823"/>
    <lineage>
        <taxon>Eukaryota</taxon>
        <taxon>Metazoa</taxon>
        <taxon>Chordata</taxon>
        <taxon>Craniata</taxon>
        <taxon>Vertebrata</taxon>
        <taxon>Euteleostomi</taxon>
        <taxon>Mammalia</taxon>
        <taxon>Eutheria</taxon>
        <taxon>Laurasiatheria</taxon>
        <taxon>Artiodactyla</taxon>
        <taxon>Suina</taxon>
        <taxon>Suidae</taxon>
        <taxon>Sus</taxon>
    </lineage>
</organism>
<reference key="1">
    <citation type="submission" date="2013-02" db="EMBL/GenBank/DDBJ databases">
        <title>Global gene expression profiling of alveolar macrophages by deep sequencing.</title>
        <authorList>
            <person name="Dawson H.D."/>
            <person name="Chen C.T."/>
        </authorList>
    </citation>
    <scope>NUCLEOTIDE SEQUENCE [MRNA]</scope>
</reference>
<reference key="2">
    <citation type="submission" date="2005-07" db="EMBL/GenBank/DDBJ databases">
        <authorList>
            <consortium name="Porcine genome sequencing project"/>
        </authorList>
    </citation>
    <scope>NUCLEOTIDE SEQUENCE [LARGE SCALE GENOMIC DNA]</scope>
</reference>
<reference key="3">
    <citation type="journal article" date="2013" name="Circulation">
        <title>Pivotal role of Rho-associated kinase 2 in generating the intrinsic circadian rhythm of vascular contractility.</title>
        <authorList>
            <person name="Saito T."/>
            <person name="Hirano M."/>
            <person name="Ide T."/>
            <person name="Ichiki T."/>
            <person name="Koibuchi N."/>
            <person name="Sunagawa K."/>
            <person name="Hirano K."/>
        </authorList>
    </citation>
    <scope>FUNCTION</scope>
    <scope>INDUCTION</scope>
</reference>
<name>ROCK2_PIG</name>
<accession>M3TYT0</accession>
<accession>F1SCR1</accession>
<sequence>MSRPPPTGKMPGAPEAVSGDGAGASRQRKLEALIRDPRSPINVESLLDGLNSLVLDLDFPALRKNKNIDNFLNRYEKIVKKIRGLQMKAEDYDVVKVIGRGAFGEVQLVRHKASQKVYAMKLLSKFEMIKRSDSAFFWEERDIMAFANSPWVVQLFCAFQDDKYLYMVMEYMPGGDLVNLMSNYDVPEKWAKFYTAEVVLALDAIHSMGLIHRDVKPDNMLLDKHGHLKLADFGTCMKMDETGMVHCDTAVGTPDYISPEVLKSQGGDGYYGRECDWWSVGVFLFEMLVGDTPFYADSLVGTYSKIMDHKNSLCFPEDAEISKHAKNLICAFLTDREVRLGRNGVEEIKQHPFFKNDQWNWDNIRETAAPVVPELSSDIDSSNFDDIEDDKGDVETFPIPKAFVGNQLPFIGFTYYRENLLLSDSPSCKENDSIQIRKNEESQEIQKKLYTLEEHLSTEIQAKEELEQKCKSVNTRLEKVAKELEEEIALRKNVESALRQLEREKALLQHKNAEYQRKADHEADKKRNLENDVNSLKDQLEDLKKRNQNSQISTEKVNQLQRQLDETNALLRTESDTAARLRKTQAESSKQIQQLESNNRDLQDKNCLLETAKLKLEKDFINLQSVLESERRDRTHGSEIINDLQGRISGLEEDLKNGKILLTKVEMEKRQLQERFTDLEKEKNNMEIDMTYQLKVIQQSLEQEEAEHKATKARLADKNKIYESIEEAKSEAMKEMEKKLLEERTLKQKVENLLLEAEKRCSILDCDLKQSQQKINELLKQKDVLNEDVRNLTLKIEQETQKRCLTQNDLKMQTQQVNTLKMSEKQLKQENNHLMEMKMSLEKQNAELRKERQDADGQMKELQDQLEAEQYFSTLYKTQVRELKEECEEKTKLCKELQQKKQELQDERDSLAAQLEITLTKADSEQLARSIAEEQYSDLEKEKIMKELEIKEMMARHKQELTEKDTTIASLEETNRTLTSDVANLANEKEELNNKLKDAQEQLSRLKDEEISAAAIKAQFEKQLLTERTLKTQAVNKLAEIMNRKEPVKRGNDTDMRRKEKENRKLHMELKSEREKLTQQMIKYQKELNEMQAQIAEESQIRIELQMTLDSKDSDIEQLRSQLQALHIGLDSSSIGSGPGDAEADDGFPESRLEGWLSLPVRNNTKKFGWVKKYVIVSSKKILFYDSEQDKEQSNPYMVLDIDKLFHVRPVTQTDVYRADAKEIPRIFQILYANEGESKKEQEFPVEPVGEKSNCICHKGHEFIPTLYHFPTNCEACMKPLWHMFKPPPALECRRCHIKCHKDHMDKKEEIIAPCKVYYDISSAKNLLLLANSTEEQQKWVSRLVKKIPKKPPAPDPFARSSPRTSMKIQQNQSIRRPSRQLAANKPS</sequence>
<evidence type="ECO:0000250" key="1"/>
<evidence type="ECO:0000250" key="2">
    <source>
        <dbReference type="UniProtKB" id="O75116"/>
    </source>
</evidence>
<evidence type="ECO:0000250" key="3">
    <source>
        <dbReference type="UniProtKB" id="P70336"/>
    </source>
</evidence>
<evidence type="ECO:0000250" key="4">
    <source>
        <dbReference type="UniProtKB" id="Q28021"/>
    </source>
</evidence>
<evidence type="ECO:0000250" key="5">
    <source>
        <dbReference type="UniProtKB" id="Q62868"/>
    </source>
</evidence>
<evidence type="ECO:0000255" key="6"/>
<evidence type="ECO:0000255" key="7">
    <source>
        <dbReference type="PROSITE-ProRule" id="PRU00145"/>
    </source>
</evidence>
<evidence type="ECO:0000255" key="8">
    <source>
        <dbReference type="PROSITE-ProRule" id="PRU00159"/>
    </source>
</evidence>
<evidence type="ECO:0000255" key="9">
    <source>
        <dbReference type="PROSITE-ProRule" id="PRU00226"/>
    </source>
</evidence>
<evidence type="ECO:0000255" key="10">
    <source>
        <dbReference type="PROSITE-ProRule" id="PRU00618"/>
    </source>
</evidence>
<evidence type="ECO:0000255" key="11">
    <source>
        <dbReference type="PROSITE-ProRule" id="PRU01206"/>
    </source>
</evidence>
<evidence type="ECO:0000255" key="12">
    <source>
        <dbReference type="PROSITE-ProRule" id="PRU01207"/>
    </source>
</evidence>
<evidence type="ECO:0000255" key="13">
    <source>
        <dbReference type="PROSITE-ProRule" id="PRU10027"/>
    </source>
</evidence>
<evidence type="ECO:0000256" key="14">
    <source>
        <dbReference type="SAM" id="MobiDB-lite"/>
    </source>
</evidence>
<evidence type="ECO:0000269" key="15">
    <source>
    </source>
</evidence>
<evidence type="ECO:0000305" key="16"/>
<protein>
    <recommendedName>
        <fullName>Rho-associated protein kinase 2</fullName>
        <ecNumber>2.7.11.1</ecNumber>
    </recommendedName>
    <alternativeName>
        <fullName>Rho kinase 2</fullName>
    </alternativeName>
    <alternativeName>
        <fullName>Rho-associated, coiled-coil-containing protein kinase 2</fullName>
    </alternativeName>
    <alternativeName>
        <fullName>Rho-associated, coiled-coil-containing protein kinase II</fullName>
        <shortName>ROCK-II</shortName>
    </alternativeName>
    <alternativeName>
        <fullName>p164 ROCK-2</fullName>
    </alternativeName>
</protein>